<protein>
    <recommendedName>
        <fullName>Elongation factor Tu, apicoplast</fullName>
        <shortName>EF-Tu</shortName>
        <ecNumber evidence="2">3.6.5.3</ecNumber>
    </recommendedName>
</protein>
<proteinExistence type="inferred from homology"/>
<comment type="function">
    <text evidence="2">GTP hydrolase that promotes the GTP-dependent binding of aminoacyl-tRNA to the A-site of ribosomes during protein biosynthesis.</text>
</comment>
<comment type="catalytic activity">
    <reaction evidence="2">
        <text>GTP + H2O = GDP + phosphate + H(+)</text>
        <dbReference type="Rhea" id="RHEA:19669"/>
        <dbReference type="ChEBI" id="CHEBI:15377"/>
        <dbReference type="ChEBI" id="CHEBI:15378"/>
        <dbReference type="ChEBI" id="CHEBI:37565"/>
        <dbReference type="ChEBI" id="CHEBI:43474"/>
        <dbReference type="ChEBI" id="CHEBI:58189"/>
        <dbReference type="EC" id="3.6.5.3"/>
    </reaction>
    <physiologicalReaction direction="left-to-right" evidence="2">
        <dbReference type="Rhea" id="RHEA:19670"/>
    </physiologicalReaction>
</comment>
<comment type="subcellular location">
    <subcellularLocation>
        <location>Plastid</location>
        <location>Apicoplast</location>
    </subcellularLocation>
</comment>
<comment type="similarity">
    <text evidence="3">Belongs to the TRAFAC class translation factor GTPase superfamily. Classic translation factor GTPase family. EF-Tu/EF-1A subfamily.</text>
</comment>
<geneLocation type="apicoplast"/>
<name>EFTU_THEPA</name>
<evidence type="ECO:0000250" key="1"/>
<evidence type="ECO:0000255" key="2">
    <source>
        <dbReference type="HAMAP-Rule" id="MF_00118"/>
    </source>
</evidence>
<evidence type="ECO:0000305" key="3"/>
<dbReference type="EC" id="3.6.5.3" evidence="2"/>
<dbReference type="EMBL" id="AAGK01000009">
    <property type="protein sequence ID" value="EAN30405.1"/>
    <property type="molecule type" value="Genomic_DNA"/>
</dbReference>
<dbReference type="RefSeq" id="XP_762688.1">
    <property type="nucleotide sequence ID" value="XM_757595.1"/>
</dbReference>
<dbReference type="SMR" id="Q4MYA4"/>
<dbReference type="STRING" id="5875.Q4MYA4"/>
<dbReference type="EnsemblProtists" id="EAN30405">
    <property type="protein sequence ID" value="EAN30405"/>
    <property type="gene ID" value="TP05_0019"/>
</dbReference>
<dbReference type="GeneID" id="3882243"/>
<dbReference type="KEGG" id="tpv:TP05_0019"/>
<dbReference type="VEuPathDB" id="PiroplasmaDB:TpMuguga_05g00019"/>
<dbReference type="eggNOG" id="KOG0460">
    <property type="taxonomic scope" value="Eukaryota"/>
</dbReference>
<dbReference type="InParanoid" id="Q4MYA4"/>
<dbReference type="OMA" id="PFDRIDR"/>
<dbReference type="Proteomes" id="UP000001949">
    <property type="component" value="Unassembled WGS sequence"/>
</dbReference>
<dbReference type="GO" id="GO:0020011">
    <property type="term" value="C:apicoplast"/>
    <property type="evidence" value="ECO:0007669"/>
    <property type="project" value="UniProtKB-SubCell"/>
</dbReference>
<dbReference type="GO" id="GO:0005739">
    <property type="term" value="C:mitochondrion"/>
    <property type="evidence" value="ECO:0007669"/>
    <property type="project" value="TreeGrafter"/>
</dbReference>
<dbReference type="GO" id="GO:0005525">
    <property type="term" value="F:GTP binding"/>
    <property type="evidence" value="ECO:0007669"/>
    <property type="project" value="UniProtKB-KW"/>
</dbReference>
<dbReference type="GO" id="GO:0003924">
    <property type="term" value="F:GTPase activity"/>
    <property type="evidence" value="ECO:0007669"/>
    <property type="project" value="InterPro"/>
</dbReference>
<dbReference type="GO" id="GO:0003746">
    <property type="term" value="F:translation elongation factor activity"/>
    <property type="evidence" value="ECO:0007669"/>
    <property type="project" value="UniProtKB-KW"/>
</dbReference>
<dbReference type="GO" id="GO:0070125">
    <property type="term" value="P:mitochondrial translational elongation"/>
    <property type="evidence" value="ECO:0007669"/>
    <property type="project" value="TreeGrafter"/>
</dbReference>
<dbReference type="CDD" id="cd01884">
    <property type="entry name" value="EF_Tu"/>
    <property type="match status" value="1"/>
</dbReference>
<dbReference type="CDD" id="cd03697">
    <property type="entry name" value="EFTU_II"/>
    <property type="match status" value="1"/>
</dbReference>
<dbReference type="CDD" id="cd03707">
    <property type="entry name" value="EFTU_III"/>
    <property type="match status" value="1"/>
</dbReference>
<dbReference type="FunFam" id="2.40.30.10:FF:000001">
    <property type="entry name" value="Elongation factor Tu"/>
    <property type="match status" value="1"/>
</dbReference>
<dbReference type="FunFam" id="3.40.50.300:FF:000003">
    <property type="entry name" value="Elongation factor Tu"/>
    <property type="match status" value="1"/>
</dbReference>
<dbReference type="Gene3D" id="3.40.50.300">
    <property type="entry name" value="P-loop containing nucleotide triphosphate hydrolases"/>
    <property type="match status" value="1"/>
</dbReference>
<dbReference type="Gene3D" id="2.40.30.10">
    <property type="entry name" value="Translation factors"/>
    <property type="match status" value="2"/>
</dbReference>
<dbReference type="HAMAP" id="MF_00118_B">
    <property type="entry name" value="EF_Tu_B"/>
    <property type="match status" value="1"/>
</dbReference>
<dbReference type="InterPro" id="IPR041709">
    <property type="entry name" value="EF-Tu_GTP-bd"/>
</dbReference>
<dbReference type="InterPro" id="IPR050055">
    <property type="entry name" value="EF-Tu_GTPase"/>
</dbReference>
<dbReference type="InterPro" id="IPR004161">
    <property type="entry name" value="EFTu-like_2"/>
</dbReference>
<dbReference type="InterPro" id="IPR033720">
    <property type="entry name" value="EFTU_2"/>
</dbReference>
<dbReference type="InterPro" id="IPR031157">
    <property type="entry name" value="G_TR_CS"/>
</dbReference>
<dbReference type="InterPro" id="IPR027417">
    <property type="entry name" value="P-loop_NTPase"/>
</dbReference>
<dbReference type="InterPro" id="IPR005225">
    <property type="entry name" value="Small_GTP-bd"/>
</dbReference>
<dbReference type="InterPro" id="IPR000795">
    <property type="entry name" value="T_Tr_GTP-bd_dom"/>
</dbReference>
<dbReference type="InterPro" id="IPR009000">
    <property type="entry name" value="Transl_B-barrel_sf"/>
</dbReference>
<dbReference type="InterPro" id="IPR009001">
    <property type="entry name" value="Transl_elong_EF1A/Init_IF2_C"/>
</dbReference>
<dbReference type="InterPro" id="IPR004541">
    <property type="entry name" value="Transl_elong_EFTu/EF1A_bac/org"/>
</dbReference>
<dbReference type="InterPro" id="IPR004160">
    <property type="entry name" value="Transl_elong_EFTu/EF1A_C"/>
</dbReference>
<dbReference type="NCBIfam" id="TIGR00485">
    <property type="entry name" value="EF-Tu"/>
    <property type="match status" value="1"/>
</dbReference>
<dbReference type="NCBIfam" id="NF000766">
    <property type="entry name" value="PRK00049.1"/>
    <property type="match status" value="1"/>
</dbReference>
<dbReference type="NCBIfam" id="NF009372">
    <property type="entry name" value="PRK12735.1"/>
    <property type="match status" value="1"/>
</dbReference>
<dbReference type="NCBIfam" id="NF009373">
    <property type="entry name" value="PRK12736.1"/>
    <property type="match status" value="1"/>
</dbReference>
<dbReference type="NCBIfam" id="TIGR00231">
    <property type="entry name" value="small_GTP"/>
    <property type="match status" value="1"/>
</dbReference>
<dbReference type="PANTHER" id="PTHR43721:SF22">
    <property type="entry name" value="ELONGATION FACTOR TU, MITOCHONDRIAL"/>
    <property type="match status" value="1"/>
</dbReference>
<dbReference type="PANTHER" id="PTHR43721">
    <property type="entry name" value="ELONGATION FACTOR TU-RELATED"/>
    <property type="match status" value="1"/>
</dbReference>
<dbReference type="Pfam" id="PF00009">
    <property type="entry name" value="GTP_EFTU"/>
    <property type="match status" value="1"/>
</dbReference>
<dbReference type="Pfam" id="PF03144">
    <property type="entry name" value="GTP_EFTU_D2"/>
    <property type="match status" value="1"/>
</dbReference>
<dbReference type="Pfam" id="PF03143">
    <property type="entry name" value="GTP_EFTU_D3"/>
    <property type="match status" value="1"/>
</dbReference>
<dbReference type="PRINTS" id="PR00315">
    <property type="entry name" value="ELONGATNFCT"/>
</dbReference>
<dbReference type="SUPFAM" id="SSF50465">
    <property type="entry name" value="EF-Tu/eEF-1alpha/eIF2-gamma C-terminal domain"/>
    <property type="match status" value="1"/>
</dbReference>
<dbReference type="SUPFAM" id="SSF52540">
    <property type="entry name" value="P-loop containing nucleoside triphosphate hydrolases"/>
    <property type="match status" value="1"/>
</dbReference>
<dbReference type="SUPFAM" id="SSF50447">
    <property type="entry name" value="Translation proteins"/>
    <property type="match status" value="1"/>
</dbReference>
<dbReference type="PROSITE" id="PS00301">
    <property type="entry name" value="G_TR_1"/>
    <property type="match status" value="1"/>
</dbReference>
<dbReference type="PROSITE" id="PS51722">
    <property type="entry name" value="G_TR_2"/>
    <property type="match status" value="1"/>
</dbReference>
<accession>Q4MYA4</accession>
<keyword id="KW-0933">Apicoplast</keyword>
<keyword id="KW-0251">Elongation factor</keyword>
<keyword id="KW-0342">GTP-binding</keyword>
<keyword id="KW-0378">Hydrolase</keyword>
<keyword id="KW-0460">Magnesium</keyword>
<keyword id="KW-0479">Metal-binding</keyword>
<keyword id="KW-0547">Nucleotide-binding</keyword>
<keyword id="KW-0934">Plastid</keyword>
<keyword id="KW-0648">Protein biosynthesis</keyword>
<keyword id="KW-1185">Reference proteome</keyword>
<feature type="chain" id="PRO_0000232687" description="Elongation factor Tu, apicoplast">
    <location>
        <begin position="1"/>
        <end position="411"/>
    </location>
</feature>
<feature type="domain" description="tr-type G">
    <location>
        <begin position="10"/>
        <end position="214"/>
    </location>
</feature>
<feature type="region of interest" description="G1" evidence="1">
    <location>
        <begin position="19"/>
        <end position="26"/>
    </location>
</feature>
<feature type="region of interest" description="G2" evidence="1">
    <location>
        <begin position="61"/>
        <end position="65"/>
    </location>
</feature>
<feature type="region of interest" description="G3" evidence="1">
    <location>
        <begin position="82"/>
        <end position="85"/>
    </location>
</feature>
<feature type="region of interest" description="G4" evidence="1">
    <location>
        <begin position="137"/>
        <end position="140"/>
    </location>
</feature>
<feature type="region of interest" description="G5" evidence="1">
    <location>
        <begin position="175"/>
        <end position="177"/>
    </location>
</feature>
<feature type="binding site" evidence="1">
    <location>
        <begin position="19"/>
        <end position="26"/>
    </location>
    <ligand>
        <name>GTP</name>
        <dbReference type="ChEBI" id="CHEBI:37565"/>
    </ligand>
</feature>
<feature type="binding site" evidence="2">
    <location>
        <position position="26"/>
    </location>
    <ligand>
        <name>Mg(2+)</name>
        <dbReference type="ChEBI" id="CHEBI:18420"/>
    </ligand>
</feature>
<feature type="binding site" evidence="1">
    <location>
        <begin position="82"/>
        <end position="86"/>
    </location>
    <ligand>
        <name>GTP</name>
        <dbReference type="ChEBI" id="CHEBI:37565"/>
    </ligand>
</feature>
<feature type="binding site" evidence="1">
    <location>
        <begin position="137"/>
        <end position="140"/>
    </location>
    <ligand>
        <name>GTP</name>
        <dbReference type="ChEBI" id="CHEBI:37565"/>
    </ligand>
</feature>
<gene>
    <name type="primary">tufA</name>
    <name type="ordered locus">TP05_0019</name>
</gene>
<reference key="1">
    <citation type="journal article" date="2005" name="Science">
        <title>Genome sequence of Theileria parva, a bovine pathogen that transforms lymphocytes.</title>
        <authorList>
            <person name="Gardner M.J."/>
            <person name="Bishop R."/>
            <person name="Shah T."/>
            <person name="de Villiers E.P."/>
            <person name="Carlton J.M."/>
            <person name="Hall N."/>
            <person name="Ren Q."/>
            <person name="Paulsen I.T."/>
            <person name="Pain A."/>
            <person name="Berriman M."/>
            <person name="Wilson R.J.M."/>
            <person name="Sato S."/>
            <person name="Ralph S.A."/>
            <person name="Mann D.J."/>
            <person name="Xiong Z."/>
            <person name="Shallom S.J."/>
            <person name="Weidman J."/>
            <person name="Jiang L."/>
            <person name="Lynn J."/>
            <person name="Weaver B."/>
            <person name="Shoaibi A."/>
            <person name="Domingo A.R."/>
            <person name="Wasawo D."/>
            <person name="Crabtree J."/>
            <person name="Wortman J.R."/>
            <person name="Haas B."/>
            <person name="Angiuoli S.V."/>
            <person name="Creasy T.H."/>
            <person name="Lu C."/>
            <person name="Suh B."/>
            <person name="Silva J.C."/>
            <person name="Utterback T.R."/>
            <person name="Feldblyum T.V."/>
            <person name="Pertea M."/>
            <person name="Allen J."/>
            <person name="Nierman W.C."/>
            <person name="Taracha E.L.N."/>
            <person name="Salzberg S.L."/>
            <person name="White O.R."/>
            <person name="Fitzhugh H.A."/>
            <person name="Morzaria S."/>
            <person name="Venter J.C."/>
            <person name="Fraser C.M."/>
            <person name="Nene V."/>
        </authorList>
    </citation>
    <scope>NUCLEOTIDE SEQUENCE [LARGE SCALE GENOMIC DNA]</scope>
    <source>
        <strain>Muguga</strain>
    </source>
</reference>
<organism>
    <name type="scientific">Theileria parva</name>
    <name type="common">East coast fever infection agent</name>
    <dbReference type="NCBI Taxonomy" id="5875"/>
    <lineage>
        <taxon>Eukaryota</taxon>
        <taxon>Sar</taxon>
        <taxon>Alveolata</taxon>
        <taxon>Apicomplexa</taxon>
        <taxon>Aconoidasida</taxon>
        <taxon>Piroplasmida</taxon>
        <taxon>Theileriidae</taxon>
        <taxon>Theileria</taxon>
    </lineage>
</organism>
<sequence>MSKEQFLRNKPHVNIGTIGHVDHGKTTLTSAITSVLKLKGCTEKSYSYEDIDSTKEEKKRGITINTTHVEYESDLRHYAHIDCPGHADYIKNMIIGAVQMDGAILVISLEDGPMPQTIEHLLLAKQIGIKKLVVFLNKEDKVDDEEIIFFIKEETKSMLDKYGFDSTLTPLITGSALKALEEIKLLKEIDLNNKWISKVINLIDTVDSYIEKPERNLNKPFLMPIEDSFYITGRGTVVTGRIENGIVKLNDKVELYGYDKSKLTSVIGIEMFNKGLSQGESGDNVGLLLRGIIKEDVKRGHVVAKPKSLKFYSEFKATLYILTSKEGGRTNPFKIGYKPQFFIRTLDITGEIKKLYSTTNENNTLELAIPGDNINANISLSKSIVLEKELRFSVREGGKTIGHGIIIDLIK</sequence>